<protein>
    <recommendedName>
        <fullName evidence="1">Co-chaperonin GroES</fullName>
    </recommendedName>
    <alternativeName>
        <fullName evidence="1">10 kDa chaperonin</fullName>
    </alternativeName>
    <alternativeName>
        <fullName evidence="1">Chaperonin-10</fullName>
        <shortName evidence="1">Cpn10</shortName>
    </alternativeName>
</protein>
<keyword id="KW-0143">Chaperone</keyword>
<keyword id="KW-0963">Cytoplasm</keyword>
<keyword id="KW-1185">Reference proteome</keyword>
<organism>
    <name type="scientific">Citrifermentans bemidjiense (strain ATCC BAA-1014 / DSM 16622 / JCM 12645 / Bem)</name>
    <name type="common">Geobacter bemidjiensis</name>
    <dbReference type="NCBI Taxonomy" id="404380"/>
    <lineage>
        <taxon>Bacteria</taxon>
        <taxon>Pseudomonadati</taxon>
        <taxon>Thermodesulfobacteriota</taxon>
        <taxon>Desulfuromonadia</taxon>
        <taxon>Geobacterales</taxon>
        <taxon>Geobacteraceae</taxon>
        <taxon>Citrifermentans</taxon>
    </lineage>
</organism>
<sequence>MNLRPLQDRIIVKRVEEATMTAGGLYIPETAKEKPQQGEVVAVGNGKRGEDGKVYPIDLKVGDKVLFGKYAGSEVKLEGEDFLIMREDDILGVVEK</sequence>
<name>CH10_CITBB</name>
<gene>
    <name evidence="1" type="primary">groES</name>
    <name evidence="1" type="synonym">groS</name>
    <name type="ordered locus">Gbem_0248</name>
</gene>
<reference key="1">
    <citation type="submission" date="2008-07" db="EMBL/GenBank/DDBJ databases">
        <title>Complete sequence of Geobacter bemidjiensis BEM.</title>
        <authorList>
            <consortium name="US DOE Joint Genome Institute"/>
            <person name="Lucas S."/>
            <person name="Copeland A."/>
            <person name="Lapidus A."/>
            <person name="Glavina del Rio T."/>
            <person name="Dalin E."/>
            <person name="Tice H."/>
            <person name="Bruce D."/>
            <person name="Goodwin L."/>
            <person name="Pitluck S."/>
            <person name="Kiss H."/>
            <person name="Brettin T."/>
            <person name="Detter J.C."/>
            <person name="Han C."/>
            <person name="Kuske C.R."/>
            <person name="Schmutz J."/>
            <person name="Larimer F."/>
            <person name="Land M."/>
            <person name="Hauser L."/>
            <person name="Kyrpides N."/>
            <person name="Lykidis A."/>
            <person name="Lovley D."/>
            <person name="Richardson P."/>
        </authorList>
    </citation>
    <scope>NUCLEOTIDE SEQUENCE [LARGE SCALE GENOMIC DNA]</scope>
    <source>
        <strain>ATCC BAA-1014 / DSM 16622 / JCM 12645 / Bem</strain>
    </source>
</reference>
<evidence type="ECO:0000255" key="1">
    <source>
        <dbReference type="HAMAP-Rule" id="MF_00580"/>
    </source>
</evidence>
<comment type="function">
    <text evidence="1">Together with the chaperonin GroEL, plays an essential role in assisting protein folding. The GroEL-GroES system forms a nano-cage that allows encapsulation of the non-native substrate proteins and provides a physical environment optimized to promote and accelerate protein folding. GroES binds to the apical surface of the GroEL ring, thereby capping the opening of the GroEL channel.</text>
</comment>
<comment type="subunit">
    <text evidence="1">Heptamer of 7 subunits arranged in a ring. Interacts with the chaperonin GroEL.</text>
</comment>
<comment type="subcellular location">
    <subcellularLocation>
        <location evidence="1">Cytoplasm</location>
    </subcellularLocation>
</comment>
<comment type="similarity">
    <text evidence="1">Belongs to the GroES chaperonin family.</text>
</comment>
<proteinExistence type="inferred from homology"/>
<dbReference type="EMBL" id="CP001124">
    <property type="protein sequence ID" value="ACH37279.1"/>
    <property type="molecule type" value="Genomic_DNA"/>
</dbReference>
<dbReference type="RefSeq" id="WP_012528687.1">
    <property type="nucleotide sequence ID" value="NC_011146.1"/>
</dbReference>
<dbReference type="SMR" id="B5E9Y1"/>
<dbReference type="STRING" id="404380.Gbem_0248"/>
<dbReference type="KEGG" id="gbm:Gbem_0248"/>
<dbReference type="eggNOG" id="COG0234">
    <property type="taxonomic scope" value="Bacteria"/>
</dbReference>
<dbReference type="HOGENOM" id="CLU_132825_2_0_7"/>
<dbReference type="OrthoDB" id="9806791at2"/>
<dbReference type="Proteomes" id="UP000008825">
    <property type="component" value="Chromosome"/>
</dbReference>
<dbReference type="GO" id="GO:0005737">
    <property type="term" value="C:cytoplasm"/>
    <property type="evidence" value="ECO:0007669"/>
    <property type="project" value="UniProtKB-SubCell"/>
</dbReference>
<dbReference type="GO" id="GO:0005524">
    <property type="term" value="F:ATP binding"/>
    <property type="evidence" value="ECO:0007669"/>
    <property type="project" value="InterPro"/>
</dbReference>
<dbReference type="GO" id="GO:0046872">
    <property type="term" value="F:metal ion binding"/>
    <property type="evidence" value="ECO:0007669"/>
    <property type="project" value="TreeGrafter"/>
</dbReference>
<dbReference type="GO" id="GO:0044183">
    <property type="term" value="F:protein folding chaperone"/>
    <property type="evidence" value="ECO:0007669"/>
    <property type="project" value="InterPro"/>
</dbReference>
<dbReference type="GO" id="GO:0051087">
    <property type="term" value="F:protein-folding chaperone binding"/>
    <property type="evidence" value="ECO:0007669"/>
    <property type="project" value="TreeGrafter"/>
</dbReference>
<dbReference type="GO" id="GO:0051082">
    <property type="term" value="F:unfolded protein binding"/>
    <property type="evidence" value="ECO:0007669"/>
    <property type="project" value="TreeGrafter"/>
</dbReference>
<dbReference type="GO" id="GO:0051085">
    <property type="term" value="P:chaperone cofactor-dependent protein refolding"/>
    <property type="evidence" value="ECO:0007669"/>
    <property type="project" value="TreeGrafter"/>
</dbReference>
<dbReference type="CDD" id="cd00320">
    <property type="entry name" value="cpn10"/>
    <property type="match status" value="1"/>
</dbReference>
<dbReference type="FunFam" id="2.30.33.40:FF:000001">
    <property type="entry name" value="10 kDa chaperonin"/>
    <property type="match status" value="1"/>
</dbReference>
<dbReference type="Gene3D" id="2.30.33.40">
    <property type="entry name" value="GroES chaperonin"/>
    <property type="match status" value="1"/>
</dbReference>
<dbReference type="HAMAP" id="MF_00580">
    <property type="entry name" value="CH10"/>
    <property type="match status" value="1"/>
</dbReference>
<dbReference type="InterPro" id="IPR020818">
    <property type="entry name" value="Chaperonin_GroES"/>
</dbReference>
<dbReference type="InterPro" id="IPR037124">
    <property type="entry name" value="Chaperonin_GroES_sf"/>
</dbReference>
<dbReference type="InterPro" id="IPR018369">
    <property type="entry name" value="Chaprnonin_Cpn10_CS"/>
</dbReference>
<dbReference type="InterPro" id="IPR011032">
    <property type="entry name" value="GroES-like_sf"/>
</dbReference>
<dbReference type="NCBIfam" id="NF001527">
    <property type="entry name" value="PRK00364.1-2"/>
    <property type="match status" value="1"/>
</dbReference>
<dbReference type="NCBIfam" id="NF001529">
    <property type="entry name" value="PRK00364.1-5"/>
    <property type="match status" value="1"/>
</dbReference>
<dbReference type="NCBIfam" id="NF001531">
    <property type="entry name" value="PRK00364.2-2"/>
    <property type="match status" value="1"/>
</dbReference>
<dbReference type="NCBIfam" id="NF001533">
    <property type="entry name" value="PRK00364.2-4"/>
    <property type="match status" value="1"/>
</dbReference>
<dbReference type="NCBIfam" id="NF001534">
    <property type="entry name" value="PRK00364.2-5"/>
    <property type="match status" value="1"/>
</dbReference>
<dbReference type="PANTHER" id="PTHR10772">
    <property type="entry name" value="10 KDA HEAT SHOCK PROTEIN"/>
    <property type="match status" value="1"/>
</dbReference>
<dbReference type="PANTHER" id="PTHR10772:SF58">
    <property type="entry name" value="CO-CHAPERONIN GROES"/>
    <property type="match status" value="1"/>
</dbReference>
<dbReference type="Pfam" id="PF00166">
    <property type="entry name" value="Cpn10"/>
    <property type="match status" value="1"/>
</dbReference>
<dbReference type="PRINTS" id="PR00297">
    <property type="entry name" value="CHAPERONIN10"/>
</dbReference>
<dbReference type="SMART" id="SM00883">
    <property type="entry name" value="Cpn10"/>
    <property type="match status" value="1"/>
</dbReference>
<dbReference type="SUPFAM" id="SSF50129">
    <property type="entry name" value="GroES-like"/>
    <property type="match status" value="1"/>
</dbReference>
<dbReference type="PROSITE" id="PS00681">
    <property type="entry name" value="CHAPERONINS_CPN10"/>
    <property type="match status" value="1"/>
</dbReference>
<accession>B5E9Y1</accession>
<feature type="chain" id="PRO_1000129665" description="Co-chaperonin GroES">
    <location>
        <begin position="1"/>
        <end position="96"/>
    </location>
</feature>